<protein>
    <recommendedName>
        <fullName>Tyrosine-protein phosphatase CpsB</fullName>
        <ecNumber>3.1.3.48</ecNumber>
    </recommendedName>
</protein>
<dbReference type="EC" id="3.1.3.48"/>
<dbReference type="EMBL" id="AF337958">
    <property type="protein sequence ID" value="AAK11659.1"/>
    <property type="molecule type" value="Genomic_DNA"/>
</dbReference>
<dbReference type="EMBL" id="AF355776">
    <property type="protein sequence ID" value="AAK43603.1"/>
    <property type="molecule type" value="Genomic_DNA"/>
</dbReference>
<dbReference type="SMR" id="P0C0T7"/>
<dbReference type="OMA" id="MHNLGPR"/>
<dbReference type="UniPathway" id="UPA00934"/>
<dbReference type="GO" id="GO:0030145">
    <property type="term" value="F:manganese ion binding"/>
    <property type="evidence" value="ECO:0007669"/>
    <property type="project" value="InterPro"/>
</dbReference>
<dbReference type="GO" id="GO:0004725">
    <property type="term" value="F:protein tyrosine phosphatase activity"/>
    <property type="evidence" value="ECO:0007669"/>
    <property type="project" value="UniProtKB-EC"/>
</dbReference>
<dbReference type="GO" id="GO:0045227">
    <property type="term" value="P:capsule polysaccharide biosynthetic process"/>
    <property type="evidence" value="ECO:0007669"/>
    <property type="project" value="UniProtKB-UniPathway"/>
</dbReference>
<dbReference type="Gene3D" id="3.20.20.140">
    <property type="entry name" value="Metal-dependent hydrolases"/>
    <property type="match status" value="1"/>
</dbReference>
<dbReference type="InterPro" id="IPR048208">
    <property type="entry name" value="Caps_polysacc_synth_CpsB"/>
</dbReference>
<dbReference type="InterPro" id="IPR016667">
    <property type="entry name" value="Caps_polysacc_synth_CpsB/CapC"/>
</dbReference>
<dbReference type="InterPro" id="IPR032466">
    <property type="entry name" value="Metal_Hydrolase"/>
</dbReference>
<dbReference type="NCBIfam" id="NF041488">
    <property type="entry name" value="caps_synth_Cps4B"/>
    <property type="match status" value="1"/>
</dbReference>
<dbReference type="PANTHER" id="PTHR39181">
    <property type="entry name" value="TYROSINE-PROTEIN PHOSPHATASE YWQE"/>
    <property type="match status" value="1"/>
</dbReference>
<dbReference type="PANTHER" id="PTHR39181:SF1">
    <property type="entry name" value="TYROSINE-PROTEIN PHOSPHATASE YWQE"/>
    <property type="match status" value="1"/>
</dbReference>
<dbReference type="Pfam" id="PF19567">
    <property type="entry name" value="CpsB_CapC"/>
    <property type="match status" value="1"/>
</dbReference>
<dbReference type="PIRSF" id="PIRSF016557">
    <property type="entry name" value="Caps_synth_CpsB"/>
    <property type="match status" value="1"/>
</dbReference>
<dbReference type="SUPFAM" id="SSF51556">
    <property type="entry name" value="Metallo-dependent hydrolases"/>
    <property type="match status" value="1"/>
</dbReference>
<evidence type="ECO:0000250" key="1"/>
<evidence type="ECO:0000305" key="2"/>
<keyword id="KW-0972">Capsule biogenesis/degradation</keyword>
<keyword id="KW-0270">Exopolysaccharide synthesis</keyword>
<keyword id="KW-0378">Hydrolase</keyword>
<keyword id="KW-0464">Manganese</keyword>
<keyword id="KW-0904">Protein phosphatase</keyword>
<gene>
    <name type="primary">cpsB</name>
    <name type="synonym">cpsIaB</name>
</gene>
<reference key="1">
    <citation type="submission" date="2001-01" db="EMBL/GenBank/DDBJ databases">
        <authorList>
            <person name="McKinnon K."/>
            <person name="Chaffin D.O."/>
            <person name="Rubens C.E."/>
        </authorList>
    </citation>
    <scope>NUCLEOTIDE SEQUENCE [GENOMIC DNA]</scope>
    <source>
        <strain>NT6 / Serotype VI</strain>
    </source>
</reference>
<reference key="2">
    <citation type="submission" date="2001-03" db="EMBL/GenBank/DDBJ databases">
        <authorList>
            <person name="McKinnon K."/>
            <person name="Chaffin D.O."/>
            <person name="Rubens C.E."/>
        </authorList>
    </citation>
    <scope>NUCLEOTIDE SEQUENCE [GENOMIC DNA]</scope>
    <source>
        <strain>ATCC 49446 / 3139 / CNCTC 1/82 / Serotype IV</strain>
    </source>
</reference>
<feature type="chain" id="PRO_0000057887" description="Tyrosine-protein phosphatase CpsB">
    <location>
        <begin position="1"/>
        <end position="243"/>
    </location>
</feature>
<name>CPSB_STRAG</name>
<sequence length="243" mass="28600">MIDIHSHIVFDVDDGPKTLEESLSLIEESYRQGVRIIVSTSHRRKGMFETPEDIIFKNFSIVKHEAEKRFEHLQILYGGELYYTSDMLEKLKLKQIPTLNNTKFALIEFSMQTSWKDIHTALSNVLMLGITPVVAHIERYNALENQKERVKEIINMGCYTQINSSHILKQKLFNDKHKRFKKRARYFLEENLVHFVASDMHNLDVRPPFLAEAYKIICRDFGKERANQLFIENAQSILKNHYI</sequence>
<proteinExistence type="inferred from homology"/>
<comment type="function">
    <text evidence="1">Dephosphorylates CpsD. Involved in the regulation of capsular polysaccharide biosynthesis (By similarity).</text>
</comment>
<comment type="catalytic activity">
    <reaction>
        <text>O-phospho-L-tyrosyl-[protein] + H2O = L-tyrosyl-[protein] + phosphate</text>
        <dbReference type="Rhea" id="RHEA:10684"/>
        <dbReference type="Rhea" id="RHEA-COMP:10136"/>
        <dbReference type="Rhea" id="RHEA-COMP:20101"/>
        <dbReference type="ChEBI" id="CHEBI:15377"/>
        <dbReference type="ChEBI" id="CHEBI:43474"/>
        <dbReference type="ChEBI" id="CHEBI:46858"/>
        <dbReference type="ChEBI" id="CHEBI:61978"/>
        <dbReference type="EC" id="3.1.3.48"/>
    </reaction>
</comment>
<comment type="cofactor">
    <cofactor evidence="1">
        <name>Mn(2+)</name>
        <dbReference type="ChEBI" id="CHEBI:29035"/>
    </cofactor>
</comment>
<comment type="pathway">
    <text>Capsule biogenesis; capsule polysaccharide biosynthesis.</text>
</comment>
<comment type="similarity">
    <text evidence="2">Belongs to the metallo-dependent hydrolases superfamily. CpsB/CapC family.</text>
</comment>
<accession>P0C0T7</accession>
<accession>P0A365</accession>
<accession>Q9S0S9</accession>
<organism>
    <name type="scientific">Streptococcus agalactiae</name>
    <dbReference type="NCBI Taxonomy" id="1311"/>
    <lineage>
        <taxon>Bacteria</taxon>
        <taxon>Bacillati</taxon>
        <taxon>Bacillota</taxon>
        <taxon>Bacilli</taxon>
        <taxon>Lactobacillales</taxon>
        <taxon>Streptococcaceae</taxon>
        <taxon>Streptococcus</taxon>
    </lineage>
</organism>